<reference key="1">
    <citation type="journal article" date="2004" name="Nat. Genet.">
        <title>Complete sequencing and characterization of 21,243 full-length human cDNAs.</title>
        <authorList>
            <person name="Ota T."/>
            <person name="Suzuki Y."/>
            <person name="Nishikawa T."/>
            <person name="Otsuki T."/>
            <person name="Sugiyama T."/>
            <person name="Irie R."/>
            <person name="Wakamatsu A."/>
            <person name="Hayashi K."/>
            <person name="Sato H."/>
            <person name="Nagai K."/>
            <person name="Kimura K."/>
            <person name="Makita H."/>
            <person name="Sekine M."/>
            <person name="Obayashi M."/>
            <person name="Nishi T."/>
            <person name="Shibahara T."/>
            <person name="Tanaka T."/>
            <person name="Ishii S."/>
            <person name="Yamamoto J."/>
            <person name="Saito K."/>
            <person name="Kawai Y."/>
            <person name="Isono Y."/>
            <person name="Nakamura Y."/>
            <person name="Nagahari K."/>
            <person name="Murakami K."/>
            <person name="Yasuda T."/>
            <person name="Iwayanagi T."/>
            <person name="Wagatsuma M."/>
            <person name="Shiratori A."/>
            <person name="Sudo H."/>
            <person name="Hosoiri T."/>
            <person name="Kaku Y."/>
            <person name="Kodaira H."/>
            <person name="Kondo H."/>
            <person name="Sugawara M."/>
            <person name="Takahashi M."/>
            <person name="Kanda K."/>
            <person name="Yokoi T."/>
            <person name="Furuya T."/>
            <person name="Kikkawa E."/>
            <person name="Omura Y."/>
            <person name="Abe K."/>
            <person name="Kamihara K."/>
            <person name="Katsuta N."/>
            <person name="Sato K."/>
            <person name="Tanikawa M."/>
            <person name="Yamazaki M."/>
            <person name="Ninomiya K."/>
            <person name="Ishibashi T."/>
            <person name="Yamashita H."/>
            <person name="Murakawa K."/>
            <person name="Fujimori K."/>
            <person name="Tanai H."/>
            <person name="Kimata M."/>
            <person name="Watanabe M."/>
            <person name="Hiraoka S."/>
            <person name="Chiba Y."/>
            <person name="Ishida S."/>
            <person name="Ono Y."/>
            <person name="Takiguchi S."/>
            <person name="Watanabe S."/>
            <person name="Yosida M."/>
            <person name="Hotuta T."/>
            <person name="Kusano J."/>
            <person name="Kanehori K."/>
            <person name="Takahashi-Fujii A."/>
            <person name="Hara H."/>
            <person name="Tanase T.-O."/>
            <person name="Nomura Y."/>
            <person name="Togiya S."/>
            <person name="Komai F."/>
            <person name="Hara R."/>
            <person name="Takeuchi K."/>
            <person name="Arita M."/>
            <person name="Imose N."/>
            <person name="Musashino K."/>
            <person name="Yuuki H."/>
            <person name="Oshima A."/>
            <person name="Sasaki N."/>
            <person name="Aotsuka S."/>
            <person name="Yoshikawa Y."/>
            <person name="Matsunawa H."/>
            <person name="Ichihara T."/>
            <person name="Shiohata N."/>
            <person name="Sano S."/>
            <person name="Moriya S."/>
            <person name="Momiyama H."/>
            <person name="Satoh N."/>
            <person name="Takami S."/>
            <person name="Terashima Y."/>
            <person name="Suzuki O."/>
            <person name="Nakagawa S."/>
            <person name="Senoh A."/>
            <person name="Mizoguchi H."/>
            <person name="Goto Y."/>
            <person name="Shimizu F."/>
            <person name="Wakebe H."/>
            <person name="Hishigaki H."/>
            <person name="Watanabe T."/>
            <person name="Sugiyama A."/>
            <person name="Takemoto M."/>
            <person name="Kawakami B."/>
            <person name="Yamazaki M."/>
            <person name="Watanabe K."/>
            <person name="Kumagai A."/>
            <person name="Itakura S."/>
            <person name="Fukuzumi Y."/>
            <person name="Fujimori Y."/>
            <person name="Komiyama M."/>
            <person name="Tashiro H."/>
            <person name="Tanigami A."/>
            <person name="Fujiwara T."/>
            <person name="Ono T."/>
            <person name="Yamada K."/>
            <person name="Fujii Y."/>
            <person name="Ozaki K."/>
            <person name="Hirao M."/>
            <person name="Ohmori Y."/>
            <person name="Kawabata A."/>
            <person name="Hikiji T."/>
            <person name="Kobatake N."/>
            <person name="Inagaki H."/>
            <person name="Ikema Y."/>
            <person name="Okamoto S."/>
            <person name="Okitani R."/>
            <person name="Kawakami T."/>
            <person name="Noguchi S."/>
            <person name="Itoh T."/>
            <person name="Shigeta K."/>
            <person name="Senba T."/>
            <person name="Matsumura K."/>
            <person name="Nakajima Y."/>
            <person name="Mizuno T."/>
            <person name="Morinaga M."/>
            <person name="Sasaki M."/>
            <person name="Togashi T."/>
            <person name="Oyama M."/>
            <person name="Hata H."/>
            <person name="Watanabe M."/>
            <person name="Komatsu T."/>
            <person name="Mizushima-Sugano J."/>
            <person name="Satoh T."/>
            <person name="Shirai Y."/>
            <person name="Takahashi Y."/>
            <person name="Nakagawa K."/>
            <person name="Okumura K."/>
            <person name="Nagase T."/>
            <person name="Nomura N."/>
            <person name="Kikuchi H."/>
            <person name="Masuho Y."/>
            <person name="Yamashita R."/>
            <person name="Nakai K."/>
            <person name="Yada T."/>
            <person name="Nakamura Y."/>
            <person name="Ohara O."/>
            <person name="Isogai T."/>
            <person name="Sugano S."/>
        </authorList>
    </citation>
    <scope>NUCLEOTIDE SEQUENCE [LARGE SCALE MRNA] (ISOFORMS 1 AND 3)</scope>
    <source>
        <tissue>Thalamus</tissue>
    </source>
</reference>
<reference key="2">
    <citation type="journal article" date="2006" name="Nature">
        <title>Analysis of the DNA sequence and duplication history of human chromosome 15.</title>
        <authorList>
            <person name="Zody M.C."/>
            <person name="Garber M."/>
            <person name="Sharpe T."/>
            <person name="Young S.K."/>
            <person name="Rowen L."/>
            <person name="O'Neill K."/>
            <person name="Whittaker C.A."/>
            <person name="Kamal M."/>
            <person name="Chang J.L."/>
            <person name="Cuomo C.A."/>
            <person name="Dewar K."/>
            <person name="FitzGerald M.G."/>
            <person name="Kodira C.D."/>
            <person name="Madan A."/>
            <person name="Qin S."/>
            <person name="Yang X."/>
            <person name="Abbasi N."/>
            <person name="Abouelleil A."/>
            <person name="Arachchi H.M."/>
            <person name="Baradarani L."/>
            <person name="Birditt B."/>
            <person name="Bloom S."/>
            <person name="Bloom T."/>
            <person name="Borowsky M.L."/>
            <person name="Burke J."/>
            <person name="Butler J."/>
            <person name="Cook A."/>
            <person name="DeArellano K."/>
            <person name="DeCaprio D."/>
            <person name="Dorris L. III"/>
            <person name="Dors M."/>
            <person name="Eichler E.E."/>
            <person name="Engels R."/>
            <person name="Fahey J."/>
            <person name="Fleetwood P."/>
            <person name="Friedman C."/>
            <person name="Gearin G."/>
            <person name="Hall J.L."/>
            <person name="Hensley G."/>
            <person name="Johnson E."/>
            <person name="Jones C."/>
            <person name="Kamat A."/>
            <person name="Kaur A."/>
            <person name="Locke D.P."/>
            <person name="Madan A."/>
            <person name="Munson G."/>
            <person name="Jaffe D.B."/>
            <person name="Lui A."/>
            <person name="Macdonald P."/>
            <person name="Mauceli E."/>
            <person name="Naylor J.W."/>
            <person name="Nesbitt R."/>
            <person name="Nicol R."/>
            <person name="O'Leary S.B."/>
            <person name="Ratcliffe A."/>
            <person name="Rounsley S."/>
            <person name="She X."/>
            <person name="Sneddon K.M.B."/>
            <person name="Stewart S."/>
            <person name="Sougnez C."/>
            <person name="Stone S.M."/>
            <person name="Topham K."/>
            <person name="Vincent D."/>
            <person name="Wang S."/>
            <person name="Zimmer A.R."/>
            <person name="Birren B.W."/>
            <person name="Hood L."/>
            <person name="Lander E.S."/>
            <person name="Nusbaum C."/>
        </authorList>
    </citation>
    <scope>NUCLEOTIDE SEQUENCE [LARGE SCALE GENOMIC DNA]</scope>
</reference>
<reference key="3">
    <citation type="submission" date="2005-09" db="EMBL/GenBank/DDBJ databases">
        <authorList>
            <person name="Mural R.J."/>
            <person name="Istrail S."/>
            <person name="Sutton G.G."/>
            <person name="Florea L."/>
            <person name="Halpern A.L."/>
            <person name="Mobarry C.M."/>
            <person name="Lippert R."/>
            <person name="Walenz B."/>
            <person name="Shatkay H."/>
            <person name="Dew I."/>
            <person name="Miller J.R."/>
            <person name="Flanigan M.J."/>
            <person name="Edwards N.J."/>
            <person name="Bolanos R."/>
            <person name="Fasulo D."/>
            <person name="Halldorsson B.V."/>
            <person name="Hannenhalli S."/>
            <person name="Turner R."/>
            <person name="Yooseph S."/>
            <person name="Lu F."/>
            <person name="Nusskern D.R."/>
            <person name="Shue B.C."/>
            <person name="Zheng X.H."/>
            <person name="Zhong F."/>
            <person name="Delcher A.L."/>
            <person name="Huson D.H."/>
            <person name="Kravitz S.A."/>
            <person name="Mouchard L."/>
            <person name="Reinert K."/>
            <person name="Remington K.A."/>
            <person name="Clark A.G."/>
            <person name="Waterman M.S."/>
            <person name="Eichler E.E."/>
            <person name="Adams M.D."/>
            <person name="Hunkapiller M.W."/>
            <person name="Myers E.W."/>
            <person name="Venter J.C."/>
        </authorList>
    </citation>
    <scope>NUCLEOTIDE SEQUENCE [LARGE SCALE GENOMIC DNA]</scope>
</reference>
<reference key="4">
    <citation type="journal article" date="2004" name="Genome Res.">
        <title>The status, quality, and expansion of the NIH full-length cDNA project: the Mammalian Gene Collection (MGC).</title>
        <authorList>
            <consortium name="The MGC Project Team"/>
        </authorList>
    </citation>
    <scope>NUCLEOTIDE SEQUENCE [LARGE SCALE MRNA] (ISOFORM 1)</scope>
    <source>
        <tissue>Lung</tissue>
    </source>
</reference>
<reference key="5">
    <citation type="journal article" date="2000" name="DNA Res.">
        <title>Characterization of long cDNA clones from human adult spleen.</title>
        <authorList>
            <person name="Hattori A."/>
            <person name="Okumura K."/>
            <person name="Nagase T."/>
            <person name="Kikuno R."/>
            <person name="Hirosawa M."/>
            <person name="Ohara O."/>
        </authorList>
    </citation>
    <scope>NUCLEOTIDE SEQUENCE [LARGE SCALE MRNA] OF 3-198 (ISOFORM 2)</scope>
    <source>
        <tissue>Spleen</tissue>
    </source>
</reference>
<reference key="6">
    <citation type="journal article" date="2008" name="Proc. Natl. Acad. Sci. U.S.A.">
        <title>A quantitative atlas of mitotic phosphorylation.</title>
        <authorList>
            <person name="Dephoure N."/>
            <person name="Zhou C."/>
            <person name="Villen J."/>
            <person name="Beausoleil S.A."/>
            <person name="Bakalarski C.E."/>
            <person name="Elledge S.J."/>
            <person name="Gygi S.P."/>
        </authorList>
    </citation>
    <scope>PHOSPHORYLATION [LARGE SCALE ANALYSIS] AT SER-125 AND SER-127</scope>
    <scope>IDENTIFICATION BY MASS SPECTROMETRY [LARGE SCALE ANALYSIS]</scope>
    <source>
        <tissue>Cervix carcinoma</tissue>
    </source>
</reference>
<reference key="7">
    <citation type="journal article" date="2013" name="J. Proteome Res.">
        <title>Toward a comprehensive characterization of a human cancer cell phosphoproteome.</title>
        <authorList>
            <person name="Zhou H."/>
            <person name="Di Palma S."/>
            <person name="Preisinger C."/>
            <person name="Peng M."/>
            <person name="Polat A.N."/>
            <person name="Heck A.J."/>
            <person name="Mohammed S."/>
        </authorList>
    </citation>
    <scope>PHOSPHORYLATION [LARGE SCALE ANALYSIS] AT SER-14 AND SER-91</scope>
    <scope>IDENTIFICATION BY MASS SPECTROMETRY [LARGE SCALE ANALYSIS]</scope>
    <source>
        <tissue>Erythroleukemia</tissue>
    </source>
</reference>
<name>F219B_HUMAN</name>
<dbReference type="EMBL" id="AK000005">
    <property type="protein sequence ID" value="BAA92230.1"/>
    <property type="molecule type" value="mRNA"/>
</dbReference>
<dbReference type="EMBL" id="AK291020">
    <property type="protein sequence ID" value="BAF83709.1"/>
    <property type="molecule type" value="mRNA"/>
</dbReference>
<dbReference type="EMBL" id="AK296403">
    <property type="protein sequence ID" value="BAG59069.1"/>
    <property type="molecule type" value="mRNA"/>
</dbReference>
<dbReference type="EMBL" id="AC125435">
    <property type="status" value="NOT_ANNOTATED_CDS"/>
    <property type="molecule type" value="Genomic_DNA"/>
</dbReference>
<dbReference type="EMBL" id="CH471136">
    <property type="protein sequence ID" value="EAW99292.1"/>
    <property type="molecule type" value="Genomic_DNA"/>
</dbReference>
<dbReference type="EMBL" id="BC015637">
    <property type="protein sequence ID" value="AAH15637.1"/>
    <property type="molecule type" value="mRNA"/>
</dbReference>
<dbReference type="CCDS" id="CCDS32295.1">
    <molecule id="Q5XKK7-1"/>
</dbReference>
<dbReference type="RefSeq" id="NP_001308849.1">
    <molecule id="Q5XKK7-1"/>
    <property type="nucleotide sequence ID" value="NM_001321920.2"/>
</dbReference>
<dbReference type="RefSeq" id="NP_001308850.1">
    <molecule id="Q5XKK7-1"/>
    <property type="nucleotide sequence ID" value="NM_001321921.2"/>
</dbReference>
<dbReference type="RefSeq" id="NP_065180.1">
    <molecule id="Q5XKK7-1"/>
    <property type="nucleotide sequence ID" value="NM_020447.5"/>
</dbReference>
<dbReference type="RefSeq" id="XP_047288839.1">
    <molecule id="Q5XKK7-1"/>
    <property type="nucleotide sequence ID" value="XM_047432883.1"/>
</dbReference>
<dbReference type="RefSeq" id="XP_054234462.1">
    <molecule id="Q5XKK7-1"/>
    <property type="nucleotide sequence ID" value="XM_054378487.1"/>
</dbReference>
<dbReference type="BioGRID" id="121433">
    <property type="interactions" value="21"/>
</dbReference>
<dbReference type="FunCoup" id="Q5XKK7">
    <property type="interactions" value="1283"/>
</dbReference>
<dbReference type="IntAct" id="Q5XKK7">
    <property type="interactions" value="19"/>
</dbReference>
<dbReference type="STRING" id="9606.ENSP00000350260"/>
<dbReference type="GlyGen" id="Q5XKK7">
    <property type="glycosylation" value="1 site, 1 O-linked glycan (1 site)"/>
</dbReference>
<dbReference type="iPTMnet" id="Q5XKK7"/>
<dbReference type="PhosphoSitePlus" id="Q5XKK7"/>
<dbReference type="SwissPalm" id="Q5XKK7"/>
<dbReference type="BioMuta" id="FAM219B"/>
<dbReference type="DMDM" id="74736248"/>
<dbReference type="jPOST" id="Q5XKK7"/>
<dbReference type="MassIVE" id="Q5XKK7"/>
<dbReference type="PaxDb" id="9606-ENSP00000350260"/>
<dbReference type="PeptideAtlas" id="Q5XKK7"/>
<dbReference type="ProteomicsDB" id="65827">
    <molecule id="Q5XKK7-1"/>
</dbReference>
<dbReference type="ProteomicsDB" id="65828">
    <molecule id="Q5XKK7-2"/>
</dbReference>
<dbReference type="ProteomicsDB" id="65829">
    <molecule id="Q5XKK7-3"/>
</dbReference>
<dbReference type="Pumba" id="Q5XKK7"/>
<dbReference type="TopDownProteomics" id="Q5XKK7-2">
    <molecule id="Q5XKK7-2"/>
</dbReference>
<dbReference type="Antibodypedia" id="55534">
    <property type="antibodies" value="11 antibodies from 4 providers"/>
</dbReference>
<dbReference type="DNASU" id="57184"/>
<dbReference type="Ensembl" id="ENST00000357635.10">
    <molecule id="Q5XKK7-1"/>
    <property type="protein sequence ID" value="ENSP00000350260.5"/>
    <property type="gene ID" value="ENSG00000178761.15"/>
</dbReference>
<dbReference type="Ensembl" id="ENST00000563069.5">
    <molecule id="Q5XKK7-3"/>
    <property type="protein sequence ID" value="ENSP00000457594.1"/>
    <property type="gene ID" value="ENSG00000178761.15"/>
</dbReference>
<dbReference type="Ensembl" id="ENST00000563119.5">
    <molecule id="Q5XKK7-1"/>
    <property type="protein sequence ID" value="ENSP00000454719.1"/>
    <property type="gene ID" value="ENSG00000178761.15"/>
</dbReference>
<dbReference type="GeneID" id="57184"/>
<dbReference type="KEGG" id="hsa:57184"/>
<dbReference type="MANE-Select" id="ENST00000357635.10">
    <property type="protein sequence ID" value="ENSP00000350260.5"/>
    <property type="RefSeq nucleotide sequence ID" value="NM_020447.5"/>
    <property type="RefSeq protein sequence ID" value="NP_065180.1"/>
</dbReference>
<dbReference type="UCSC" id="uc002azf.4">
    <molecule id="Q5XKK7-1"/>
    <property type="organism name" value="human"/>
</dbReference>
<dbReference type="AGR" id="HGNC:24695"/>
<dbReference type="CTD" id="57184"/>
<dbReference type="DisGeNET" id="57184"/>
<dbReference type="GeneCards" id="FAM219B"/>
<dbReference type="HGNC" id="HGNC:24695">
    <property type="gene designation" value="FAM219B"/>
</dbReference>
<dbReference type="HPA" id="ENSG00000178761">
    <property type="expression patterns" value="Low tissue specificity"/>
</dbReference>
<dbReference type="neXtProt" id="NX_Q5XKK7"/>
<dbReference type="OpenTargets" id="ENSG00000178761"/>
<dbReference type="PharmGKB" id="PA134953632"/>
<dbReference type="VEuPathDB" id="HostDB:ENSG00000178761"/>
<dbReference type="eggNOG" id="ENOG502S0AN">
    <property type="taxonomic scope" value="Eukaryota"/>
</dbReference>
<dbReference type="GeneTree" id="ENSGT00390000000860"/>
<dbReference type="InParanoid" id="Q5XKK7"/>
<dbReference type="OMA" id="VMHQPRQ"/>
<dbReference type="OrthoDB" id="9451307at2759"/>
<dbReference type="PAN-GO" id="Q5XKK7">
    <property type="GO annotations" value="0 GO annotations based on evolutionary models"/>
</dbReference>
<dbReference type="PhylomeDB" id="Q5XKK7"/>
<dbReference type="TreeFam" id="TF331928"/>
<dbReference type="PathwayCommons" id="Q5XKK7"/>
<dbReference type="SignaLink" id="Q5XKK7"/>
<dbReference type="BioGRID-ORCS" id="57184">
    <property type="hits" value="10 hits in 1162 CRISPR screens"/>
</dbReference>
<dbReference type="ChiTaRS" id="FAM219B">
    <property type="organism name" value="human"/>
</dbReference>
<dbReference type="GenomeRNAi" id="57184"/>
<dbReference type="Pharos" id="Q5XKK7">
    <property type="development level" value="Tdark"/>
</dbReference>
<dbReference type="PRO" id="PR:Q5XKK7"/>
<dbReference type="Proteomes" id="UP000005640">
    <property type="component" value="Chromosome 15"/>
</dbReference>
<dbReference type="RNAct" id="Q5XKK7">
    <property type="molecule type" value="protein"/>
</dbReference>
<dbReference type="Bgee" id="ENSG00000178761">
    <property type="expression patterns" value="Expressed in tendon of biceps brachii and 181 other cell types or tissues"/>
</dbReference>
<dbReference type="ExpressionAtlas" id="Q5XKK7">
    <property type="expression patterns" value="baseline and differential"/>
</dbReference>
<dbReference type="InterPro" id="IPR029339">
    <property type="entry name" value="FAM219"/>
</dbReference>
<dbReference type="PANTHER" id="PTHR31281">
    <property type="entry name" value="PROTEIN FAM219A"/>
    <property type="match status" value="1"/>
</dbReference>
<dbReference type="PANTHER" id="PTHR31281:SF2">
    <property type="entry name" value="PROTEIN FAM219B"/>
    <property type="match status" value="1"/>
</dbReference>
<dbReference type="Pfam" id="PF15260">
    <property type="entry name" value="FAM219A"/>
    <property type="match status" value="1"/>
</dbReference>
<sequence>MATAEPSGRALRLSTPGPRPSGARDRAPGAAGPPSGQIGNRALRLGERTPAAVEKRGPYMVTRAPSIQAKLQKHRDLAKAVLRRKGMLGASPNRPDSSGKRSVKFNKGYTALSQSPDENLVSLDSDSDGELGSRYSSGYSSAEQVNQDVSRQLLQDGYHLDEIPDDEDLDLIPPKPMASSTCSCCWCCLGDSSSCTLQ</sequence>
<protein>
    <recommendedName>
        <fullName>Protein FAM219B</fullName>
    </recommendedName>
</protein>
<feature type="chain" id="PRO_0000243930" description="Protein FAM219B">
    <location>
        <begin position="1"/>
        <end position="198"/>
    </location>
</feature>
<feature type="region of interest" description="Disordered" evidence="1">
    <location>
        <begin position="1"/>
        <end position="58"/>
    </location>
</feature>
<feature type="region of interest" description="Disordered" evidence="1">
    <location>
        <begin position="83"/>
        <end position="146"/>
    </location>
</feature>
<feature type="compositionally biased region" description="Polar residues" evidence="1">
    <location>
        <begin position="134"/>
        <end position="146"/>
    </location>
</feature>
<feature type="modified residue" description="Phosphoserine" evidence="6">
    <location>
        <position position="14"/>
    </location>
</feature>
<feature type="modified residue" description="Phosphoserine" evidence="6">
    <location>
        <position position="91"/>
    </location>
</feature>
<feature type="modified residue" description="Phosphoserine" evidence="5">
    <location>
        <position position="125"/>
    </location>
</feature>
<feature type="modified residue" description="Phosphoserine" evidence="5">
    <location>
        <position position="127"/>
    </location>
</feature>
<feature type="splice variant" id="VSP_019499" description="In isoform 2." evidence="2">
    <original>VKFNKGYTALS</original>
    <variation>QQAPPPLCQQL</variation>
    <location>
        <begin position="103"/>
        <end position="113"/>
    </location>
</feature>
<feature type="splice variant" id="VSP_019500" description="In isoform 2." evidence="2">
    <location>
        <begin position="114"/>
        <end position="198"/>
    </location>
</feature>
<feature type="splice variant" id="VSP_036115" description="In isoform 3." evidence="3">
    <original>SDGELGSRYSSGYSSAEQVNQD</original>
    <variation>RPFMYIPGPFSSEQYPFPGWLG</variation>
    <location>
        <begin position="127"/>
        <end position="148"/>
    </location>
</feature>
<feature type="splice variant" id="VSP_036116" description="In isoform 3." evidence="3">
    <location>
        <begin position="149"/>
        <end position="198"/>
    </location>
</feature>
<evidence type="ECO:0000256" key="1">
    <source>
        <dbReference type="SAM" id="MobiDB-lite"/>
    </source>
</evidence>
<evidence type="ECO:0000303" key="2">
    <source>
    </source>
</evidence>
<evidence type="ECO:0000303" key="3">
    <source>
    </source>
</evidence>
<evidence type="ECO:0000305" key="4"/>
<evidence type="ECO:0007744" key="5">
    <source>
    </source>
</evidence>
<evidence type="ECO:0007744" key="6">
    <source>
    </source>
</evidence>
<accession>Q5XKK7</accession>
<accession>A8K4Q5</accession>
<accession>B4DK57</accession>
<accession>Q9NXY0</accession>
<keyword id="KW-0025">Alternative splicing</keyword>
<keyword id="KW-0597">Phosphoprotein</keyword>
<keyword id="KW-1267">Proteomics identification</keyword>
<keyword id="KW-1185">Reference proteome</keyword>
<organism>
    <name type="scientific">Homo sapiens</name>
    <name type="common">Human</name>
    <dbReference type="NCBI Taxonomy" id="9606"/>
    <lineage>
        <taxon>Eukaryota</taxon>
        <taxon>Metazoa</taxon>
        <taxon>Chordata</taxon>
        <taxon>Craniata</taxon>
        <taxon>Vertebrata</taxon>
        <taxon>Euteleostomi</taxon>
        <taxon>Mammalia</taxon>
        <taxon>Eutheria</taxon>
        <taxon>Euarchontoglires</taxon>
        <taxon>Primates</taxon>
        <taxon>Haplorrhini</taxon>
        <taxon>Catarrhini</taxon>
        <taxon>Hominidae</taxon>
        <taxon>Homo</taxon>
    </lineage>
</organism>
<comment type="interaction">
    <interactant intactId="EBI-12290965">
        <id>Q5XKK7</id>
    </interactant>
    <interactant intactId="EBI-541426">
        <id>Q9BXS5</id>
        <label>AP1M1</label>
    </interactant>
    <organismsDiffer>false</organismsDiffer>
    <experiments>3</experiments>
</comment>
<comment type="interaction">
    <interactant intactId="EBI-12290965">
        <id>Q5XKK7</id>
    </interactant>
    <interactant intactId="EBI-740785">
        <id>P49639</id>
        <label>HOXA1</label>
    </interactant>
    <organismsDiffer>false</organismsDiffer>
    <experiments>3</experiments>
</comment>
<comment type="interaction">
    <interactant intactId="EBI-12290965">
        <id>Q5XKK7</id>
    </interactant>
    <interactant intactId="EBI-16439278">
        <id>Q6FHY5</id>
        <label>MEOX2</label>
    </interactant>
    <organismsDiffer>false</organismsDiffer>
    <experiments>3</experiments>
</comment>
<comment type="interaction">
    <interactant intactId="EBI-12290965">
        <id>Q5XKK7</id>
    </interactant>
    <interactant intactId="EBI-79165">
        <id>Q9NRD5</id>
        <label>PICK1</label>
    </interactant>
    <organismsDiffer>false</organismsDiffer>
    <experiments>3</experiments>
</comment>
<comment type="alternative products">
    <event type="alternative splicing"/>
    <isoform>
        <id>Q5XKK7-1</id>
        <name>1</name>
        <sequence type="displayed"/>
    </isoform>
    <isoform>
        <id>Q5XKK7-2</id>
        <name>2</name>
        <sequence type="described" ref="VSP_019499 VSP_019500"/>
    </isoform>
    <isoform>
        <id>Q5XKK7-3</id>
        <name>3</name>
        <sequence type="described" ref="VSP_036115 VSP_036116"/>
    </isoform>
</comment>
<comment type="similarity">
    <text evidence="4">Belongs to the FAM219 family.</text>
</comment>
<gene>
    <name type="primary">FAM219B</name>
    <name type="synonym">C15orf17</name>
</gene>
<proteinExistence type="evidence at protein level"/>